<keyword id="KW-0539">Nucleus</keyword>
<keyword id="KW-1185">Reference proteome</keyword>
<keyword id="KW-0678">Repressor</keyword>
<keyword id="KW-0804">Transcription</keyword>
<keyword id="KW-0805">Transcription regulation</keyword>
<proteinExistence type="evidence at transcript level"/>
<name>BHE22_CHICK</name>
<accession>Q71T09</accession>
<evidence type="ECO:0000250" key="1"/>
<evidence type="ECO:0000255" key="2">
    <source>
        <dbReference type="PROSITE-ProRule" id="PRU00981"/>
    </source>
</evidence>
<evidence type="ECO:0000256" key="3">
    <source>
        <dbReference type="SAM" id="MobiDB-lite"/>
    </source>
</evidence>
<evidence type="ECO:0000305" key="4"/>
<protein>
    <recommendedName>
        <fullName>Class E basic helix-loop-helix protein 22</fullName>
        <shortName>bHLHe22</shortName>
    </recommendedName>
    <alternativeName>
        <fullName>Class B basic helix-loop-helix protein 5</fullName>
        <shortName>bHLHb5</shortName>
    </alternativeName>
    <alternativeName>
        <fullName>NeuroB</fullName>
    </alternativeName>
    <alternativeName>
        <fullName>Protein BETA3</fullName>
    </alternativeName>
</protein>
<gene>
    <name type="primary">BHLHE22</name>
    <name type="synonym">BHLHB5</name>
</gene>
<organism>
    <name type="scientific">Gallus gallus</name>
    <name type="common">Chicken</name>
    <dbReference type="NCBI Taxonomy" id="9031"/>
    <lineage>
        <taxon>Eukaryota</taxon>
        <taxon>Metazoa</taxon>
        <taxon>Chordata</taxon>
        <taxon>Craniata</taxon>
        <taxon>Vertebrata</taxon>
        <taxon>Euteleostomi</taxon>
        <taxon>Archelosauria</taxon>
        <taxon>Archosauria</taxon>
        <taxon>Dinosauria</taxon>
        <taxon>Saurischia</taxon>
        <taxon>Theropoda</taxon>
        <taxon>Coelurosauria</taxon>
        <taxon>Aves</taxon>
        <taxon>Neognathae</taxon>
        <taxon>Galloanserae</taxon>
        <taxon>Galliformes</taxon>
        <taxon>Phasianidae</taxon>
        <taxon>Phasianinae</taxon>
        <taxon>Gallus</taxon>
    </lineage>
</organism>
<comment type="function">
    <text evidence="1">May act as a transcriptional repressor.</text>
</comment>
<comment type="subcellular location">
    <subcellularLocation>
        <location evidence="4">Nucleus</location>
    </subcellularLocation>
</comment>
<reference key="1">
    <citation type="submission" date="2000-03" db="EMBL/GenBank/DDBJ databases">
        <title>NeuroB, a novel basic helix-loop-helix protein can act as a transcriptional repressor of GAP-43 during retinogenesis in chick.</title>
        <authorList>
            <person name="Minabe-Saegusa C."/>
            <person name="Takahashi M."/>
            <person name="Ujita M."/>
            <person name="Yuasa J."/>
            <person name="Noda M."/>
        </authorList>
    </citation>
    <scope>NUCLEOTIDE SEQUENCE [MRNA]</scope>
    <source>
        <tissue>Retina</tissue>
    </source>
</reference>
<sequence length="311" mass="31543">MERALGLPAEEDLFHKSLAASAKRMESAFRSPPGLDLSHPRDRQPSPLACYEAPEPEALLQPGVGGDPLALPPGSVCVKYGESASRSSVAESSGGEQSPDDDSDGRCELLLRGAGGDPRDASPAAGGGGGGGGGGGGGPGGGGGGGLKAAEGGCSNGHGHGGSKKSKEQKALRLNINARERRRMHDLNDALDELRAVIPYAHSPSVRKLSKIATLLLAKNYILMQAQALEEMRRLVAYLNQGQAISAASLPSSAAAAAAAAAALHPALGAYEQAAGYPFSAGLPPATSCPEKCAIFNSVSSSLCKQCTEKP</sequence>
<feature type="chain" id="PRO_0000274287" description="Class E basic helix-loop-helix protein 22">
    <location>
        <begin position="1"/>
        <end position="311"/>
    </location>
</feature>
<feature type="domain" description="bHLH" evidence="2">
    <location>
        <begin position="171"/>
        <end position="225"/>
    </location>
</feature>
<feature type="region of interest" description="Disordered" evidence="3">
    <location>
        <begin position="22"/>
        <end position="170"/>
    </location>
</feature>
<feature type="compositionally biased region" description="Low complexity" evidence="3">
    <location>
        <begin position="81"/>
        <end position="96"/>
    </location>
</feature>
<feature type="compositionally biased region" description="Gly residues" evidence="3">
    <location>
        <begin position="125"/>
        <end position="147"/>
    </location>
</feature>
<dbReference type="EMBL" id="AF247676">
    <property type="protein sequence ID" value="AAQ14265.1"/>
    <property type="molecule type" value="mRNA"/>
</dbReference>
<dbReference type="RefSeq" id="NP_001383116.1">
    <property type="nucleotide sequence ID" value="NM_001396187.1"/>
</dbReference>
<dbReference type="RefSeq" id="NP_989834.1">
    <property type="nucleotide sequence ID" value="NM_204503.1"/>
</dbReference>
<dbReference type="SMR" id="Q71T09"/>
<dbReference type="FunCoup" id="Q71T09">
    <property type="interactions" value="56"/>
</dbReference>
<dbReference type="STRING" id="9031.ENSGALP00000052487"/>
<dbReference type="GeneID" id="395164"/>
<dbReference type="KEGG" id="gga:395164"/>
<dbReference type="VEuPathDB" id="HostDB:geneid_395164"/>
<dbReference type="InParanoid" id="Q71T09"/>
<dbReference type="OMA" id="AGDIFHK"/>
<dbReference type="OrthoDB" id="10011855at2759"/>
<dbReference type="PhylomeDB" id="Q71T09"/>
<dbReference type="PRO" id="PR:Q71T09"/>
<dbReference type="Proteomes" id="UP000000539">
    <property type="component" value="Unassembled WGS sequence"/>
</dbReference>
<dbReference type="GO" id="GO:0005634">
    <property type="term" value="C:nucleus"/>
    <property type="evidence" value="ECO:0000318"/>
    <property type="project" value="GO_Central"/>
</dbReference>
<dbReference type="GO" id="GO:0000981">
    <property type="term" value="F:DNA-binding transcription factor activity, RNA polymerase II-specific"/>
    <property type="evidence" value="ECO:0000318"/>
    <property type="project" value="GO_Central"/>
</dbReference>
<dbReference type="GO" id="GO:0070888">
    <property type="term" value="F:E-box binding"/>
    <property type="evidence" value="ECO:0000318"/>
    <property type="project" value="GO_Central"/>
</dbReference>
<dbReference type="GO" id="GO:0046983">
    <property type="term" value="F:protein dimerization activity"/>
    <property type="evidence" value="ECO:0007669"/>
    <property type="project" value="InterPro"/>
</dbReference>
<dbReference type="GO" id="GO:0061564">
    <property type="term" value="P:axon development"/>
    <property type="evidence" value="ECO:0000318"/>
    <property type="project" value="GO_Central"/>
</dbReference>
<dbReference type="GO" id="GO:0045944">
    <property type="term" value="P:positive regulation of transcription by RNA polymerase II"/>
    <property type="evidence" value="ECO:0000318"/>
    <property type="project" value="GO_Central"/>
</dbReference>
<dbReference type="GO" id="GO:0007423">
    <property type="term" value="P:sensory organ development"/>
    <property type="evidence" value="ECO:0000318"/>
    <property type="project" value="GO_Central"/>
</dbReference>
<dbReference type="CDD" id="cd18954">
    <property type="entry name" value="bHLH_TS_bHLHe22_bHLHb5"/>
    <property type="match status" value="1"/>
</dbReference>
<dbReference type="FunFam" id="4.10.280.10:FF:000026">
    <property type="entry name" value="Basic helix-loop-helix family, member e23"/>
    <property type="match status" value="1"/>
</dbReference>
<dbReference type="Gene3D" id="4.10.280.10">
    <property type="entry name" value="Helix-loop-helix DNA-binding domain"/>
    <property type="match status" value="1"/>
</dbReference>
<dbReference type="InterPro" id="IPR011598">
    <property type="entry name" value="bHLH_dom"/>
</dbReference>
<dbReference type="InterPro" id="IPR050359">
    <property type="entry name" value="bHLH_transcription_factors"/>
</dbReference>
<dbReference type="InterPro" id="IPR036638">
    <property type="entry name" value="HLH_DNA-bd_sf"/>
</dbReference>
<dbReference type="PANTHER" id="PTHR19290">
    <property type="entry name" value="BASIC HELIX-LOOP-HELIX PROTEIN NEUROGENIN-RELATED"/>
    <property type="match status" value="1"/>
</dbReference>
<dbReference type="PANTHER" id="PTHR19290:SF52">
    <property type="entry name" value="CLASS E BASIC HELIX-LOOP-HELIX PROTEIN 22"/>
    <property type="match status" value="1"/>
</dbReference>
<dbReference type="Pfam" id="PF00010">
    <property type="entry name" value="HLH"/>
    <property type="match status" value="1"/>
</dbReference>
<dbReference type="SMART" id="SM00353">
    <property type="entry name" value="HLH"/>
    <property type="match status" value="1"/>
</dbReference>
<dbReference type="SUPFAM" id="SSF47459">
    <property type="entry name" value="HLH, helix-loop-helix DNA-binding domain"/>
    <property type="match status" value="1"/>
</dbReference>
<dbReference type="PROSITE" id="PS50888">
    <property type="entry name" value="BHLH"/>
    <property type="match status" value="1"/>
</dbReference>